<gene>
    <name evidence="1" type="primary">rutC</name>
    <name type="ordered locus">E2348C_1061</name>
</gene>
<reference key="1">
    <citation type="journal article" date="2009" name="J. Bacteriol.">
        <title>Complete genome sequence and comparative genome analysis of enteropathogenic Escherichia coli O127:H6 strain E2348/69.</title>
        <authorList>
            <person name="Iguchi A."/>
            <person name="Thomson N.R."/>
            <person name="Ogura Y."/>
            <person name="Saunders D."/>
            <person name="Ooka T."/>
            <person name="Henderson I.R."/>
            <person name="Harris D."/>
            <person name="Asadulghani M."/>
            <person name="Kurokawa K."/>
            <person name="Dean P."/>
            <person name="Kenny B."/>
            <person name="Quail M.A."/>
            <person name="Thurston S."/>
            <person name="Dougan G."/>
            <person name="Hayashi T."/>
            <person name="Parkhill J."/>
            <person name="Frankel G."/>
        </authorList>
    </citation>
    <scope>NUCLEOTIDE SEQUENCE [LARGE SCALE GENOMIC DNA]</scope>
    <source>
        <strain>E2348/69 / EPEC</strain>
    </source>
</reference>
<accession>B7UNZ3</accession>
<evidence type="ECO:0000255" key="1">
    <source>
        <dbReference type="HAMAP-Rule" id="MF_00831"/>
    </source>
</evidence>
<name>RUTC_ECO27</name>
<proteinExistence type="inferred from homology"/>
<keyword id="KW-0378">Hydrolase</keyword>
<keyword id="KW-1185">Reference proteome</keyword>
<dbReference type="EC" id="3.5.-.-" evidence="1"/>
<dbReference type="EMBL" id="FM180568">
    <property type="protein sequence ID" value="CAS08609.1"/>
    <property type="molecule type" value="Genomic_DNA"/>
</dbReference>
<dbReference type="RefSeq" id="WP_001126780.1">
    <property type="nucleotide sequence ID" value="NC_011601.1"/>
</dbReference>
<dbReference type="SMR" id="B7UNZ3"/>
<dbReference type="GeneID" id="75171086"/>
<dbReference type="KEGG" id="ecg:E2348C_1061"/>
<dbReference type="HOGENOM" id="CLU_100715_7_3_6"/>
<dbReference type="Proteomes" id="UP000008205">
    <property type="component" value="Chromosome"/>
</dbReference>
<dbReference type="GO" id="GO:0005829">
    <property type="term" value="C:cytosol"/>
    <property type="evidence" value="ECO:0007669"/>
    <property type="project" value="TreeGrafter"/>
</dbReference>
<dbReference type="GO" id="GO:0019239">
    <property type="term" value="F:deaminase activity"/>
    <property type="evidence" value="ECO:0007669"/>
    <property type="project" value="TreeGrafter"/>
</dbReference>
<dbReference type="GO" id="GO:0019740">
    <property type="term" value="P:nitrogen utilization"/>
    <property type="evidence" value="ECO:0007669"/>
    <property type="project" value="UniProtKB-UniRule"/>
</dbReference>
<dbReference type="GO" id="GO:0006212">
    <property type="term" value="P:uracil catabolic process"/>
    <property type="evidence" value="ECO:0007669"/>
    <property type="project" value="UniProtKB-UniRule"/>
</dbReference>
<dbReference type="CDD" id="cd00448">
    <property type="entry name" value="YjgF_YER057c_UK114_family"/>
    <property type="match status" value="1"/>
</dbReference>
<dbReference type="FunFam" id="3.30.1330.40:FF:000003">
    <property type="entry name" value="Putative aminoacrylate peracid reductase RutC"/>
    <property type="match status" value="1"/>
</dbReference>
<dbReference type="Gene3D" id="3.30.1330.40">
    <property type="entry name" value="RutC-like"/>
    <property type="match status" value="1"/>
</dbReference>
<dbReference type="HAMAP" id="MF_00831">
    <property type="entry name" value="RutC"/>
    <property type="match status" value="1"/>
</dbReference>
<dbReference type="InterPro" id="IPR019897">
    <property type="entry name" value="RidA_CS"/>
</dbReference>
<dbReference type="InterPro" id="IPR019898">
    <property type="entry name" value="RutC"/>
</dbReference>
<dbReference type="InterPro" id="IPR035959">
    <property type="entry name" value="RutC-like_sf"/>
</dbReference>
<dbReference type="InterPro" id="IPR006175">
    <property type="entry name" value="YjgF/YER057c/UK114"/>
</dbReference>
<dbReference type="NCBIfam" id="TIGR03610">
    <property type="entry name" value="RutC"/>
    <property type="match status" value="1"/>
</dbReference>
<dbReference type="PANTHER" id="PTHR11803">
    <property type="entry name" value="2-IMINOBUTANOATE/2-IMINOPROPANOATE DEAMINASE RIDA"/>
    <property type="match status" value="1"/>
</dbReference>
<dbReference type="PANTHER" id="PTHR11803:SF58">
    <property type="entry name" value="PROTEIN HMF1-RELATED"/>
    <property type="match status" value="1"/>
</dbReference>
<dbReference type="Pfam" id="PF01042">
    <property type="entry name" value="Ribonuc_L-PSP"/>
    <property type="match status" value="1"/>
</dbReference>
<dbReference type="SUPFAM" id="SSF55298">
    <property type="entry name" value="YjgF-like"/>
    <property type="match status" value="1"/>
</dbReference>
<dbReference type="PROSITE" id="PS01094">
    <property type="entry name" value="UPF0076"/>
    <property type="match status" value="1"/>
</dbReference>
<protein>
    <recommendedName>
        <fullName evidence="1">3-aminoacrylate deaminase RutC</fullName>
        <shortName evidence="1">3-AA deaminase</shortName>
        <ecNumber evidence="1">3.5.-.-</ecNumber>
    </recommendedName>
</protein>
<feature type="chain" id="PRO_0000402734" description="3-aminoacrylate deaminase RutC">
    <location>
        <begin position="1"/>
        <end position="128"/>
    </location>
</feature>
<sequence>MPKSVIIPAGSSAPLAPFVPGTLADGVVYVSGTLAFDQHNNVLFADDPKAQTRHVLETIRKVIETAGGTMADVTFNSIFITDWKNYAAINEIYAEFFPGDKPARFCIQCGLVKPDALVEIATIAHIAK</sequence>
<comment type="function">
    <text evidence="1">Involved in pyrimidine catabolism. Catalyzes the deamination of 3-aminoacrylate to malonic semialdehyde, a reaction that can also occur spontaneously. RutC may facilitate the reaction and modulate the metabolic fitness, rather than catalyzing essential functions.</text>
</comment>
<comment type="catalytic activity">
    <reaction evidence="1">
        <text>(Z)-3-aminoacrylate + H2O + H(+) = 3-oxopropanoate + NH4(+)</text>
        <dbReference type="Rhea" id="RHEA:34947"/>
        <dbReference type="ChEBI" id="CHEBI:15377"/>
        <dbReference type="ChEBI" id="CHEBI:15378"/>
        <dbReference type="ChEBI" id="CHEBI:28938"/>
        <dbReference type="ChEBI" id="CHEBI:33190"/>
        <dbReference type="ChEBI" id="CHEBI:59894"/>
    </reaction>
</comment>
<comment type="subunit">
    <text evidence="1">Homotrimer.</text>
</comment>
<comment type="similarity">
    <text evidence="1">Belongs to the RutC family.</text>
</comment>
<organism>
    <name type="scientific">Escherichia coli O127:H6 (strain E2348/69 / EPEC)</name>
    <dbReference type="NCBI Taxonomy" id="574521"/>
    <lineage>
        <taxon>Bacteria</taxon>
        <taxon>Pseudomonadati</taxon>
        <taxon>Pseudomonadota</taxon>
        <taxon>Gammaproteobacteria</taxon>
        <taxon>Enterobacterales</taxon>
        <taxon>Enterobacteriaceae</taxon>
        <taxon>Escherichia</taxon>
    </lineage>
</organism>